<evidence type="ECO:0000255" key="1">
    <source>
        <dbReference type="PROSITE-ProRule" id="PRU00169"/>
    </source>
</evidence>
<keyword id="KW-0597">Phosphoprotein</keyword>
<reference key="1">
    <citation type="journal article" date="2004" name="J. Bacteriol.">
        <title>Comparative genomics of two Leptospira interrogans serovars reveals novel insights into physiology and pathogenesis.</title>
        <authorList>
            <person name="Nascimento A.L.T.O."/>
            <person name="Ko A.I."/>
            <person name="Martins E.A.L."/>
            <person name="Monteiro-Vitorello C.B."/>
            <person name="Ho P.L."/>
            <person name="Haake D.A."/>
            <person name="Verjovski-Almeida S."/>
            <person name="Hartskeerl R.A."/>
            <person name="Marques M.V."/>
            <person name="Oliveira M.C."/>
            <person name="Menck C.F.M."/>
            <person name="Leite L.C.C."/>
            <person name="Carrer H."/>
            <person name="Coutinho L.L."/>
            <person name="Degrave W.M."/>
            <person name="Dellagostin O.A."/>
            <person name="El-Dorry H."/>
            <person name="Ferro E.S."/>
            <person name="Ferro M.I.T."/>
            <person name="Furlan L.R."/>
            <person name="Gamberini M."/>
            <person name="Giglioti E.A."/>
            <person name="Goes-Neto A."/>
            <person name="Goldman G.H."/>
            <person name="Goldman M.H.S."/>
            <person name="Harakava R."/>
            <person name="Jeronimo S.M.B."/>
            <person name="Junqueira-de-Azevedo I.L.M."/>
            <person name="Kimura E.T."/>
            <person name="Kuramae E.E."/>
            <person name="Lemos E.G.M."/>
            <person name="Lemos M.V.F."/>
            <person name="Marino C.L."/>
            <person name="Nunes L.R."/>
            <person name="de Oliveira R.C."/>
            <person name="Pereira G.G."/>
            <person name="Reis M.S."/>
            <person name="Schriefer A."/>
            <person name="Siqueira W.J."/>
            <person name="Sommer P."/>
            <person name="Tsai S.M."/>
            <person name="Simpson A.J.G."/>
            <person name="Ferro J.A."/>
            <person name="Camargo L.E.A."/>
            <person name="Kitajima J.P."/>
            <person name="Setubal J.C."/>
            <person name="Van Sluys M.A."/>
        </authorList>
    </citation>
    <scope>NUCLEOTIDE SEQUENCE [LARGE SCALE GENOMIC DNA]</scope>
    <source>
        <strain>Fiocruz L1-130</strain>
    </source>
</reference>
<proteinExistence type="inferred from homology"/>
<sequence length="135" mass="15076">MKAGVAPNGRPYQVLIAENSRFQAKQLAQILESEGYQVIGFAENGKELVKLYDEHRLVDLITLDLNLPVMDGYATFFEIKGKGVLPRIVIVSEENTPAVLKNLIDEGAMDYIPKPIKREKILEKVNAAIKKVPKV</sequence>
<feature type="chain" id="PRO_0000207257" description="Uncharacterized protein LIC_11769">
    <location>
        <begin position="1"/>
        <end position="135"/>
    </location>
</feature>
<feature type="domain" description="Response regulatory" evidence="1">
    <location>
        <begin position="13"/>
        <end position="129"/>
    </location>
</feature>
<feature type="modified residue" description="4-aspartylphosphate" evidence="1">
    <location>
        <position position="64"/>
    </location>
</feature>
<name>Y1769_LEPIC</name>
<protein>
    <recommendedName>
        <fullName>Uncharacterized protein LIC_11769</fullName>
    </recommendedName>
</protein>
<accession>Q72RH6</accession>
<gene>
    <name type="ordered locus">LIC_11769</name>
</gene>
<organism>
    <name type="scientific">Leptospira interrogans serogroup Icterohaemorrhagiae serovar copenhageni (strain Fiocruz L1-130)</name>
    <dbReference type="NCBI Taxonomy" id="267671"/>
    <lineage>
        <taxon>Bacteria</taxon>
        <taxon>Pseudomonadati</taxon>
        <taxon>Spirochaetota</taxon>
        <taxon>Spirochaetia</taxon>
        <taxon>Leptospirales</taxon>
        <taxon>Leptospiraceae</taxon>
        <taxon>Leptospira</taxon>
    </lineage>
</organism>
<dbReference type="EMBL" id="AE016823">
    <property type="protein sequence ID" value="AAS70358.1"/>
    <property type="molecule type" value="Genomic_DNA"/>
</dbReference>
<dbReference type="RefSeq" id="WP_000643584.1">
    <property type="nucleotide sequence ID" value="NC_005823.1"/>
</dbReference>
<dbReference type="SMR" id="Q72RH6"/>
<dbReference type="KEGG" id="lic:LIC_11769"/>
<dbReference type="HOGENOM" id="CLU_000445_69_15_12"/>
<dbReference type="Proteomes" id="UP000007037">
    <property type="component" value="Chromosome I"/>
</dbReference>
<dbReference type="GO" id="GO:0000160">
    <property type="term" value="P:phosphorelay signal transduction system"/>
    <property type="evidence" value="ECO:0007669"/>
    <property type="project" value="InterPro"/>
</dbReference>
<dbReference type="CDD" id="cd17541">
    <property type="entry name" value="REC_CheB-like"/>
    <property type="match status" value="1"/>
</dbReference>
<dbReference type="Gene3D" id="3.40.50.2300">
    <property type="match status" value="1"/>
</dbReference>
<dbReference type="InterPro" id="IPR011006">
    <property type="entry name" value="CheY-like_superfamily"/>
</dbReference>
<dbReference type="InterPro" id="IPR001789">
    <property type="entry name" value="Sig_transdc_resp-reg_receiver"/>
</dbReference>
<dbReference type="InterPro" id="IPR052048">
    <property type="entry name" value="ST_Response_Regulator"/>
</dbReference>
<dbReference type="PANTHER" id="PTHR43228">
    <property type="entry name" value="TWO-COMPONENT RESPONSE REGULATOR"/>
    <property type="match status" value="1"/>
</dbReference>
<dbReference type="PANTHER" id="PTHR43228:SF1">
    <property type="entry name" value="TWO-COMPONENT RESPONSE REGULATOR ARR22"/>
    <property type="match status" value="1"/>
</dbReference>
<dbReference type="Pfam" id="PF00072">
    <property type="entry name" value="Response_reg"/>
    <property type="match status" value="1"/>
</dbReference>
<dbReference type="SMART" id="SM00448">
    <property type="entry name" value="REC"/>
    <property type="match status" value="1"/>
</dbReference>
<dbReference type="SUPFAM" id="SSF52172">
    <property type="entry name" value="CheY-like"/>
    <property type="match status" value="1"/>
</dbReference>
<dbReference type="PROSITE" id="PS50110">
    <property type="entry name" value="RESPONSE_REGULATORY"/>
    <property type="match status" value="1"/>
</dbReference>